<dbReference type="EC" id="3.4.19.12"/>
<dbReference type="EMBL" id="AL671299">
    <property type="status" value="NOT_ANNOTATED_CDS"/>
    <property type="molecule type" value="Genomic_DNA"/>
</dbReference>
<dbReference type="EMBL" id="BC153817">
    <property type="protein sequence ID" value="AAI53818.1"/>
    <property type="molecule type" value="mRNA"/>
</dbReference>
<dbReference type="EMBL" id="BN000372">
    <property type="protein sequence ID" value="CAE51898.1"/>
    <property type="molecule type" value="mRNA"/>
</dbReference>
<dbReference type="CCDS" id="CCDS53146.1"/>
<dbReference type="RefSeq" id="NP_001156663.1">
    <property type="nucleotide sequence ID" value="NM_001163191.3"/>
</dbReference>
<dbReference type="SMR" id="Q6IE21"/>
<dbReference type="BioGRID" id="240514">
    <property type="interactions" value="2"/>
</dbReference>
<dbReference type="FunCoup" id="Q6IE21">
    <property type="interactions" value="7"/>
</dbReference>
<dbReference type="STRING" id="10090.ENSMUSP00000059861"/>
<dbReference type="MEROPS" id="C85.008"/>
<dbReference type="iPTMnet" id="Q6IE21"/>
<dbReference type="PhosphoSitePlus" id="Q6IE21"/>
<dbReference type="jPOST" id="Q6IE21"/>
<dbReference type="PaxDb" id="10090-ENSMUSP00000059861"/>
<dbReference type="ProteomicsDB" id="294402"/>
<dbReference type="Antibodypedia" id="43771">
    <property type="antibodies" value="114 antibodies from 24 providers"/>
</dbReference>
<dbReference type="Ensembl" id="ENSMUST00000060241.3">
    <property type="protein sequence ID" value="ENSMUSP00000059861.3"/>
    <property type="gene ID" value="ENSMUSG00000051582.3"/>
</dbReference>
<dbReference type="GeneID" id="408193"/>
<dbReference type="KEGG" id="mmu:408193"/>
<dbReference type="UCSC" id="uc012hms.1">
    <property type="organism name" value="mouse"/>
</dbReference>
<dbReference type="AGR" id="MGI:3644685"/>
<dbReference type="CTD" id="139562"/>
<dbReference type="MGI" id="MGI:3644685">
    <property type="gene designation" value="Otud6a"/>
</dbReference>
<dbReference type="VEuPathDB" id="HostDB:ENSMUSG00000051582"/>
<dbReference type="eggNOG" id="KOG2606">
    <property type="taxonomic scope" value="Eukaryota"/>
</dbReference>
<dbReference type="GeneTree" id="ENSGT00940000163556"/>
<dbReference type="HOGENOM" id="CLU_034963_0_0_1"/>
<dbReference type="InParanoid" id="Q6IE21"/>
<dbReference type="OMA" id="QDQLVFS"/>
<dbReference type="OrthoDB" id="415023at2759"/>
<dbReference type="PhylomeDB" id="Q6IE21"/>
<dbReference type="TreeFam" id="TF315010"/>
<dbReference type="BioGRID-ORCS" id="408193">
    <property type="hits" value="2 hits in 75 CRISPR screens"/>
</dbReference>
<dbReference type="PRO" id="PR:Q6IE21"/>
<dbReference type="Proteomes" id="UP000000589">
    <property type="component" value="Chromosome X"/>
</dbReference>
<dbReference type="RNAct" id="Q6IE21">
    <property type="molecule type" value="protein"/>
</dbReference>
<dbReference type="Bgee" id="ENSMUSG00000051582">
    <property type="expression patterns" value="Expressed in spermatid and 8 other cell types or tissues"/>
</dbReference>
<dbReference type="GO" id="GO:0004843">
    <property type="term" value="F:cysteine-type deubiquitinase activity"/>
    <property type="evidence" value="ECO:0000250"/>
    <property type="project" value="UniProtKB"/>
</dbReference>
<dbReference type="GO" id="GO:0035871">
    <property type="term" value="P:protein K11-linked deubiquitination"/>
    <property type="evidence" value="ECO:0000250"/>
    <property type="project" value="UniProtKB"/>
</dbReference>
<dbReference type="GO" id="GO:1990167">
    <property type="term" value="P:protein K27-linked deubiquitination"/>
    <property type="evidence" value="ECO:0000250"/>
    <property type="project" value="UniProtKB"/>
</dbReference>
<dbReference type="GO" id="GO:0035523">
    <property type="term" value="P:protein K29-linked deubiquitination"/>
    <property type="evidence" value="ECO:0000250"/>
    <property type="project" value="UniProtKB"/>
</dbReference>
<dbReference type="GO" id="GO:1990168">
    <property type="term" value="P:protein K33-linked deubiquitination"/>
    <property type="evidence" value="ECO:0000250"/>
    <property type="project" value="UniProtKB"/>
</dbReference>
<dbReference type="GO" id="GO:0006508">
    <property type="term" value="P:proteolysis"/>
    <property type="evidence" value="ECO:0007669"/>
    <property type="project" value="UniProtKB-KW"/>
</dbReference>
<dbReference type="CDD" id="cd22761">
    <property type="entry name" value="OTU_OTUD6"/>
    <property type="match status" value="1"/>
</dbReference>
<dbReference type="FunFam" id="3.90.70.80:FF:000003">
    <property type="entry name" value="OTU domain-containing protein 6B"/>
    <property type="match status" value="1"/>
</dbReference>
<dbReference type="Gene3D" id="3.90.70.80">
    <property type="match status" value="1"/>
</dbReference>
<dbReference type="InterPro" id="IPR003323">
    <property type="entry name" value="OTU_dom"/>
</dbReference>
<dbReference type="InterPro" id="IPR049772">
    <property type="entry name" value="OTU_OTUD6"/>
</dbReference>
<dbReference type="InterPro" id="IPR038765">
    <property type="entry name" value="Papain-like_cys_pep_sf"/>
</dbReference>
<dbReference type="InterPro" id="IPR050704">
    <property type="entry name" value="Peptidase_C85-like"/>
</dbReference>
<dbReference type="PANTHER" id="PTHR12419">
    <property type="entry name" value="OTU DOMAIN CONTAINING PROTEIN"/>
    <property type="match status" value="1"/>
</dbReference>
<dbReference type="PANTHER" id="PTHR12419:SF13">
    <property type="entry name" value="OTU DOMAIN-CONTAINING PROTEIN 6A"/>
    <property type="match status" value="1"/>
</dbReference>
<dbReference type="Pfam" id="PF02338">
    <property type="entry name" value="OTU"/>
    <property type="match status" value="1"/>
</dbReference>
<dbReference type="SUPFAM" id="SSF54001">
    <property type="entry name" value="Cysteine proteinases"/>
    <property type="match status" value="1"/>
</dbReference>
<dbReference type="PROSITE" id="PS50802">
    <property type="entry name" value="OTU"/>
    <property type="match status" value="1"/>
</dbReference>
<protein>
    <recommendedName>
        <fullName>OTU domain-containing protein 6A</fullName>
        <ecNumber>3.4.19.12</ecNumber>
    </recommendedName>
    <alternativeName>
        <fullName>Hin-6 protease</fullName>
    </alternativeName>
</protein>
<comment type="function">
    <text evidence="1">Deubiquitinating enzyme that hydrolyzes 'Lys-27'-, 'Lys-29'- and 'Lys-33'-linked polyubiquitin chains. Also able to hydrolyze 'Lys-11'-linked ubiquitin chains (By similarity).</text>
</comment>
<comment type="catalytic activity">
    <reaction>
        <text>Thiol-dependent hydrolysis of ester, thioester, amide, peptide and isopeptide bonds formed by the C-terminal Gly of ubiquitin (a 76-residue protein attached to proteins as an intracellular targeting signal).</text>
        <dbReference type="EC" id="3.4.19.12"/>
    </reaction>
</comment>
<reference key="1">
    <citation type="journal article" date="2009" name="PLoS Biol.">
        <title>Lineage-specific biology revealed by a finished genome assembly of the mouse.</title>
        <authorList>
            <person name="Church D.M."/>
            <person name="Goodstadt L."/>
            <person name="Hillier L.W."/>
            <person name="Zody M.C."/>
            <person name="Goldstein S."/>
            <person name="She X."/>
            <person name="Bult C.J."/>
            <person name="Agarwala R."/>
            <person name="Cherry J.L."/>
            <person name="DiCuccio M."/>
            <person name="Hlavina W."/>
            <person name="Kapustin Y."/>
            <person name="Meric P."/>
            <person name="Maglott D."/>
            <person name="Birtle Z."/>
            <person name="Marques A.C."/>
            <person name="Graves T."/>
            <person name="Zhou S."/>
            <person name="Teague B."/>
            <person name="Potamousis K."/>
            <person name="Churas C."/>
            <person name="Place M."/>
            <person name="Herschleb J."/>
            <person name="Runnheim R."/>
            <person name="Forrest D."/>
            <person name="Amos-Landgraf J."/>
            <person name="Schwartz D.C."/>
            <person name="Cheng Z."/>
            <person name="Lindblad-Toh K."/>
            <person name="Eichler E.E."/>
            <person name="Ponting C.P."/>
        </authorList>
    </citation>
    <scope>NUCLEOTIDE SEQUENCE [LARGE SCALE GENOMIC DNA]</scope>
    <source>
        <strain>C57BL/6J</strain>
    </source>
</reference>
<reference key="2">
    <citation type="journal article" date="2004" name="Genome Res.">
        <title>The status, quality, and expansion of the NIH full-length cDNA project: the Mammalian Gene Collection (MGC).</title>
        <authorList>
            <consortium name="The MGC Project Team"/>
        </authorList>
    </citation>
    <scope>NUCLEOTIDE SEQUENCE [LARGE SCALE MRNA]</scope>
</reference>
<reference key="3">
    <citation type="journal article" date="2004" name="Genome Res.">
        <title>A genomic analysis of rat proteases and protease inhibitors.</title>
        <authorList>
            <person name="Puente X.S."/>
            <person name="Lopez-Otin C."/>
        </authorList>
    </citation>
    <scope>IDENTIFICATION</scope>
</reference>
<reference key="4">
    <citation type="journal article" date="2010" name="Cell">
        <title>A tissue-specific atlas of mouse protein phosphorylation and expression.</title>
        <authorList>
            <person name="Huttlin E.L."/>
            <person name="Jedrychowski M.P."/>
            <person name="Elias J.E."/>
            <person name="Goswami T."/>
            <person name="Rad R."/>
            <person name="Beausoleil S.A."/>
            <person name="Villen J."/>
            <person name="Haas W."/>
            <person name="Sowa M.E."/>
            <person name="Gygi S.P."/>
        </authorList>
    </citation>
    <scope>IDENTIFICATION BY MASS SPECTROMETRY [LARGE SCALE ANALYSIS]</scope>
    <source>
        <tissue>Testis</tissue>
    </source>
</reference>
<gene>
    <name type="primary">Otud6a</name>
    <name type="synonym">Hin6</name>
</gene>
<evidence type="ECO:0000250" key="1"/>
<evidence type="ECO:0000255" key="2">
    <source>
        <dbReference type="PROSITE-ProRule" id="PRU00139"/>
    </source>
</evidence>
<evidence type="ECO:0000256" key="3">
    <source>
        <dbReference type="SAM" id="MobiDB-lite"/>
    </source>
</evidence>
<organism>
    <name type="scientific">Mus musculus</name>
    <name type="common">Mouse</name>
    <dbReference type="NCBI Taxonomy" id="10090"/>
    <lineage>
        <taxon>Eukaryota</taxon>
        <taxon>Metazoa</taxon>
        <taxon>Chordata</taxon>
        <taxon>Craniata</taxon>
        <taxon>Vertebrata</taxon>
        <taxon>Euteleostomi</taxon>
        <taxon>Mammalia</taxon>
        <taxon>Eutheria</taxon>
        <taxon>Euarchontoglires</taxon>
        <taxon>Glires</taxon>
        <taxon>Rodentia</taxon>
        <taxon>Myomorpha</taxon>
        <taxon>Muroidea</taxon>
        <taxon>Muridae</taxon>
        <taxon>Murinae</taxon>
        <taxon>Mus</taxon>
        <taxon>Mus</taxon>
    </lineage>
</organism>
<feature type="chain" id="PRO_0000076278" description="OTU domain-containing protein 6A">
    <location>
        <begin position="1"/>
        <end position="290"/>
    </location>
</feature>
<feature type="domain" description="OTU" evidence="2">
    <location>
        <begin position="142"/>
        <end position="276"/>
    </location>
</feature>
<feature type="region of interest" description="Disordered" evidence="3">
    <location>
        <begin position="27"/>
        <end position="117"/>
    </location>
</feature>
<feature type="region of interest" description="Cys-loop" evidence="1">
    <location>
        <begin position="147"/>
        <end position="153"/>
    </location>
</feature>
<feature type="region of interest" description="Variable-loop" evidence="1">
    <location>
        <begin position="211"/>
        <end position="221"/>
    </location>
</feature>
<feature type="region of interest" description="His-loop" evidence="1">
    <location>
        <begin position="259"/>
        <end position="269"/>
    </location>
</feature>
<feature type="compositionally biased region" description="Basic and acidic residues" evidence="3">
    <location>
        <begin position="49"/>
        <end position="68"/>
    </location>
</feature>
<feature type="compositionally biased region" description="Basic residues" evidence="3">
    <location>
        <begin position="95"/>
        <end position="108"/>
    </location>
</feature>
<feature type="active site" evidence="1">
    <location>
        <position position="150"/>
    </location>
</feature>
<feature type="active site" description="Nucleophile" evidence="1">
    <location>
        <position position="153"/>
    </location>
</feature>
<feature type="active site" evidence="1">
    <location>
        <position position="269"/>
    </location>
</feature>
<accession>Q6IE21</accession>
<accession>A2ADU1</accession>
<accession>A8E630</accession>
<proteinExistence type="evidence at protein level"/>
<sequence>MSDTEQELQRVIRRHYREKRELQAHIQTLKASVPKNDKGRRKQMLADISRLEAEMEQRHKQELEKFGENPDSSVDSVTADLEKMNLENMPPRPPKAQKRRDRRAHQERRHQERMPAAQAEQLAANRREEEEKVAAILGAKNLEMKTIPADGHCMYRAIQDQLVFSVTIESLRYRTAYYMRKHIDDFLPFFTEPEAGNFYTREDFLRYCDDIVHNASWGGQLELRALSHVLQTPIEVVQANSPTIVIGEEYTRKPVTLVYLHYACDFGEHYNSVKPIEVAGAFGGMAPRLF</sequence>
<keyword id="KW-0378">Hydrolase</keyword>
<keyword id="KW-0645">Protease</keyword>
<keyword id="KW-1185">Reference proteome</keyword>
<keyword id="KW-0788">Thiol protease</keyword>
<keyword id="KW-0833">Ubl conjugation pathway</keyword>
<name>OTU6A_MOUSE</name>